<evidence type="ECO:0000250" key="1"/>
<evidence type="ECO:0000305" key="2"/>
<accession>B2HLP4</accession>
<proteinExistence type="inferred from homology"/>
<protein>
    <recommendedName>
        <fullName>Maltokinase</fullName>
        <shortName>MaK</shortName>
        <ecNumber>2.7.1.175</ecNumber>
    </recommendedName>
    <alternativeName>
        <fullName>Maltose-1-phosphate synthase</fullName>
    </alternativeName>
</protein>
<feature type="chain" id="PRO_0000412887" description="Maltokinase">
    <location>
        <begin position="1"/>
        <end position="455"/>
    </location>
</feature>
<comment type="function">
    <text evidence="1">Catalyzes the ATP-dependent phosphorylation of maltose to maltose 1-phosphate. Is involved in a branched alpha-glucan biosynthetic pathway from trehalose, together with TreS, GlgE and GlgB (By similarity).</text>
</comment>
<comment type="catalytic activity">
    <reaction>
        <text>D-maltose + ATP = alpha-maltose 1-phosphate + ADP + H(+)</text>
        <dbReference type="Rhea" id="RHEA:31915"/>
        <dbReference type="ChEBI" id="CHEBI:15378"/>
        <dbReference type="ChEBI" id="CHEBI:17306"/>
        <dbReference type="ChEBI" id="CHEBI:30616"/>
        <dbReference type="ChEBI" id="CHEBI:63576"/>
        <dbReference type="ChEBI" id="CHEBI:456216"/>
        <dbReference type="EC" id="2.7.1.175"/>
    </reaction>
</comment>
<comment type="pathway">
    <text>Glycan biosynthesis; glycogen biosynthesis.</text>
</comment>
<comment type="subunit">
    <text evidence="1">Monomer.</text>
</comment>
<comment type="similarity">
    <text evidence="2">Belongs to the aminoglycoside phosphotransferase family.</text>
</comment>
<name>MAK_MYCMM</name>
<reference key="1">
    <citation type="journal article" date="2008" name="Genome Res.">
        <title>Insights from the complete genome sequence of Mycobacterium marinum on the evolution of Mycobacterium tuberculosis.</title>
        <authorList>
            <person name="Stinear T.P."/>
            <person name="Seemann T."/>
            <person name="Harrison P.F."/>
            <person name="Jenkin G.A."/>
            <person name="Davies J.K."/>
            <person name="Johnson P.D."/>
            <person name="Abdellah Z."/>
            <person name="Arrowsmith C."/>
            <person name="Chillingworth T."/>
            <person name="Churcher C."/>
            <person name="Clarke K."/>
            <person name="Cronin A."/>
            <person name="Davis P."/>
            <person name="Goodhead I."/>
            <person name="Holroyd N."/>
            <person name="Jagels K."/>
            <person name="Lord A."/>
            <person name="Moule S."/>
            <person name="Mungall K."/>
            <person name="Norbertczak H."/>
            <person name="Quail M.A."/>
            <person name="Rabbinowitsch E."/>
            <person name="Walker D."/>
            <person name="White B."/>
            <person name="Whitehead S."/>
            <person name="Small P.L."/>
            <person name="Brosch R."/>
            <person name="Ramakrishnan L."/>
            <person name="Fischbach M.A."/>
            <person name="Parkhill J."/>
            <person name="Cole S.T."/>
        </authorList>
    </citation>
    <scope>NUCLEOTIDE SEQUENCE [LARGE SCALE GENOMIC DNA]</scope>
    <source>
        <strain>ATCC BAA-535 / M</strain>
    </source>
</reference>
<keyword id="KW-0067">ATP-binding</keyword>
<keyword id="KW-0119">Carbohydrate metabolism</keyword>
<keyword id="KW-0320">Glycogen biosynthesis</keyword>
<keyword id="KW-0321">Glycogen metabolism</keyword>
<keyword id="KW-0418">Kinase</keyword>
<keyword id="KW-0547">Nucleotide-binding</keyword>
<keyword id="KW-1185">Reference proteome</keyword>
<keyword id="KW-0808">Transferase</keyword>
<dbReference type="EC" id="2.7.1.175"/>
<dbReference type="EMBL" id="CP000854">
    <property type="protein sequence ID" value="ACC38793.1"/>
    <property type="molecule type" value="Genomic_DNA"/>
</dbReference>
<dbReference type="RefSeq" id="WP_012392311.1">
    <property type="nucleotide sequence ID" value="NC_010612.1"/>
</dbReference>
<dbReference type="SMR" id="B2HLP4"/>
<dbReference type="STRING" id="216594.MMAR_0326"/>
<dbReference type="KEGG" id="mmi:MMAR_0326"/>
<dbReference type="eggNOG" id="COG3281">
    <property type="taxonomic scope" value="Bacteria"/>
</dbReference>
<dbReference type="HOGENOM" id="CLU_029675_0_0_11"/>
<dbReference type="OrthoDB" id="3787729at2"/>
<dbReference type="UniPathway" id="UPA00164"/>
<dbReference type="Proteomes" id="UP000001190">
    <property type="component" value="Chromosome"/>
</dbReference>
<dbReference type="GO" id="GO:0005524">
    <property type="term" value="F:ATP binding"/>
    <property type="evidence" value="ECO:0007669"/>
    <property type="project" value="UniProtKB-KW"/>
</dbReference>
<dbReference type="GO" id="GO:0016301">
    <property type="term" value="F:kinase activity"/>
    <property type="evidence" value="ECO:0007669"/>
    <property type="project" value="UniProtKB-KW"/>
</dbReference>
<dbReference type="GO" id="GO:0046835">
    <property type="term" value="P:carbohydrate phosphorylation"/>
    <property type="evidence" value="ECO:0000250"/>
    <property type="project" value="UniProtKB"/>
</dbReference>
<dbReference type="GO" id="GO:0005978">
    <property type="term" value="P:glycogen biosynthetic process"/>
    <property type="evidence" value="ECO:0007669"/>
    <property type="project" value="UniProtKB-UniPathway"/>
</dbReference>
<dbReference type="GO" id="GO:0005992">
    <property type="term" value="P:trehalose biosynthetic process"/>
    <property type="evidence" value="ECO:0000250"/>
    <property type="project" value="UniProtKB"/>
</dbReference>
<dbReference type="FunFam" id="3.90.1200.10:FF:000010">
    <property type="entry name" value="Maltokinase"/>
    <property type="match status" value="1"/>
</dbReference>
<dbReference type="Gene3D" id="3.90.1200.10">
    <property type="match status" value="1"/>
</dbReference>
<dbReference type="InterPro" id="IPR011009">
    <property type="entry name" value="Kinase-like_dom_sf"/>
</dbReference>
<dbReference type="InterPro" id="IPR040999">
    <property type="entry name" value="Mak_N_cap"/>
</dbReference>
<dbReference type="Pfam" id="PF18085">
    <property type="entry name" value="Mak_N_cap"/>
    <property type="match status" value="1"/>
</dbReference>
<dbReference type="SUPFAM" id="SSF56112">
    <property type="entry name" value="Protein kinase-like (PK-like)"/>
    <property type="match status" value="1"/>
</dbReference>
<gene>
    <name type="primary">mak</name>
    <name type="ordered locus">MMAR_0326</name>
</gene>
<sequence length="455" mass="49365">MNSPATLAAKLPWSEWLPQQRWYAGRNRELAAAEPGAVVALRDDLDLVLVDVSYTDGSAERYQVLVRWDAGPVSEFSTLATIGSADDHTGFDALYDPVAPQVLLSLIDSSAVRSSSDGQVSFAREPDVELPLDAYPRVSDAEQSNTSVIFDRGQAAILKVFRRVSSGINPDIELNRVLGRAHNPHVARLLGTYEIGIPGEPPEAACPLGMATAYAANAAEGWAMATASVRDLFAEGDLYAHEVGGDFAGESRRLGEAVASVHATLAEQLGTAQATFPVDHVLARLSSTAAAVPELQQYAGTIEERFVKLVDETISVQRVHGDLHLGQVLRTPESWVLIDFEGEPGQPLRERRAPDSPLRDVAGVLRSFEYAAYGPLVDHADDKQLAARAREWITRNRTAFCEGYAAASGNDPRDSELLLAAYELDKAVYEAGYESRHRPGWLPIPLRSIARLTAT</sequence>
<organism>
    <name type="scientific">Mycobacterium marinum (strain ATCC BAA-535 / M)</name>
    <dbReference type="NCBI Taxonomy" id="216594"/>
    <lineage>
        <taxon>Bacteria</taxon>
        <taxon>Bacillati</taxon>
        <taxon>Actinomycetota</taxon>
        <taxon>Actinomycetes</taxon>
        <taxon>Mycobacteriales</taxon>
        <taxon>Mycobacteriaceae</taxon>
        <taxon>Mycobacterium</taxon>
        <taxon>Mycobacterium ulcerans group</taxon>
    </lineage>
</organism>